<name>KTHY_XANC8</name>
<proteinExistence type="inferred from homology"/>
<reference key="1">
    <citation type="journal article" date="2005" name="Genome Res.">
        <title>Comparative and functional genomic analyses of the pathogenicity of phytopathogen Xanthomonas campestris pv. campestris.</title>
        <authorList>
            <person name="Qian W."/>
            <person name="Jia Y."/>
            <person name="Ren S.-X."/>
            <person name="He Y.-Q."/>
            <person name="Feng J.-X."/>
            <person name="Lu L.-F."/>
            <person name="Sun Q."/>
            <person name="Ying G."/>
            <person name="Tang D.-J."/>
            <person name="Tang H."/>
            <person name="Wu W."/>
            <person name="Hao P."/>
            <person name="Wang L."/>
            <person name="Jiang B.-L."/>
            <person name="Zeng S."/>
            <person name="Gu W.-Y."/>
            <person name="Lu G."/>
            <person name="Rong L."/>
            <person name="Tian Y."/>
            <person name="Yao Z."/>
            <person name="Fu G."/>
            <person name="Chen B."/>
            <person name="Fang R."/>
            <person name="Qiang B."/>
            <person name="Chen Z."/>
            <person name="Zhao G.-P."/>
            <person name="Tang J.-L."/>
            <person name="He C."/>
        </authorList>
    </citation>
    <scope>NUCLEOTIDE SEQUENCE [LARGE SCALE GENOMIC DNA]</scope>
    <source>
        <strain>8004</strain>
    </source>
</reference>
<keyword id="KW-0067">ATP-binding</keyword>
<keyword id="KW-0418">Kinase</keyword>
<keyword id="KW-0545">Nucleotide biosynthesis</keyword>
<keyword id="KW-0547">Nucleotide-binding</keyword>
<keyword id="KW-0808">Transferase</keyword>
<protein>
    <recommendedName>
        <fullName evidence="1">Thymidylate kinase</fullName>
        <ecNumber evidence="1">2.7.4.9</ecNumber>
    </recommendedName>
    <alternativeName>
        <fullName evidence="1">dTMP kinase</fullName>
    </alternativeName>
</protein>
<accession>Q4UPG4</accession>
<dbReference type="EC" id="2.7.4.9" evidence="1"/>
<dbReference type="EMBL" id="CP000050">
    <property type="protein sequence ID" value="AAY51059.1"/>
    <property type="molecule type" value="Genomic_DNA"/>
</dbReference>
<dbReference type="RefSeq" id="WP_011039005.1">
    <property type="nucleotide sequence ID" value="NZ_CP155948.1"/>
</dbReference>
<dbReference type="SMR" id="Q4UPG4"/>
<dbReference type="KEGG" id="xcb:XC_4020"/>
<dbReference type="HOGENOM" id="CLU_049131_0_2_6"/>
<dbReference type="Proteomes" id="UP000000420">
    <property type="component" value="Chromosome"/>
</dbReference>
<dbReference type="GO" id="GO:0005829">
    <property type="term" value="C:cytosol"/>
    <property type="evidence" value="ECO:0007669"/>
    <property type="project" value="TreeGrafter"/>
</dbReference>
<dbReference type="GO" id="GO:0005524">
    <property type="term" value="F:ATP binding"/>
    <property type="evidence" value="ECO:0007669"/>
    <property type="project" value="UniProtKB-UniRule"/>
</dbReference>
<dbReference type="GO" id="GO:0004798">
    <property type="term" value="F:dTMP kinase activity"/>
    <property type="evidence" value="ECO:0007669"/>
    <property type="project" value="UniProtKB-UniRule"/>
</dbReference>
<dbReference type="GO" id="GO:0006233">
    <property type="term" value="P:dTDP biosynthetic process"/>
    <property type="evidence" value="ECO:0007669"/>
    <property type="project" value="InterPro"/>
</dbReference>
<dbReference type="GO" id="GO:0006235">
    <property type="term" value="P:dTTP biosynthetic process"/>
    <property type="evidence" value="ECO:0007669"/>
    <property type="project" value="UniProtKB-UniRule"/>
</dbReference>
<dbReference type="GO" id="GO:0006227">
    <property type="term" value="P:dUDP biosynthetic process"/>
    <property type="evidence" value="ECO:0007669"/>
    <property type="project" value="TreeGrafter"/>
</dbReference>
<dbReference type="CDD" id="cd01672">
    <property type="entry name" value="TMPK"/>
    <property type="match status" value="1"/>
</dbReference>
<dbReference type="Gene3D" id="3.40.50.300">
    <property type="entry name" value="P-loop containing nucleotide triphosphate hydrolases"/>
    <property type="match status" value="1"/>
</dbReference>
<dbReference type="HAMAP" id="MF_00165">
    <property type="entry name" value="Thymidylate_kinase"/>
    <property type="match status" value="1"/>
</dbReference>
<dbReference type="InterPro" id="IPR027417">
    <property type="entry name" value="P-loop_NTPase"/>
</dbReference>
<dbReference type="InterPro" id="IPR039430">
    <property type="entry name" value="Thymidylate_kin-like_dom"/>
</dbReference>
<dbReference type="InterPro" id="IPR018094">
    <property type="entry name" value="Thymidylate_kinase"/>
</dbReference>
<dbReference type="NCBIfam" id="TIGR00041">
    <property type="entry name" value="DTMP_kinase"/>
    <property type="match status" value="1"/>
</dbReference>
<dbReference type="PANTHER" id="PTHR10344">
    <property type="entry name" value="THYMIDYLATE KINASE"/>
    <property type="match status" value="1"/>
</dbReference>
<dbReference type="PANTHER" id="PTHR10344:SF4">
    <property type="entry name" value="UMP-CMP KINASE 2, MITOCHONDRIAL"/>
    <property type="match status" value="1"/>
</dbReference>
<dbReference type="Pfam" id="PF02223">
    <property type="entry name" value="Thymidylate_kin"/>
    <property type="match status" value="1"/>
</dbReference>
<dbReference type="SUPFAM" id="SSF52540">
    <property type="entry name" value="P-loop containing nucleoside triphosphate hydrolases"/>
    <property type="match status" value="1"/>
</dbReference>
<gene>
    <name evidence="1" type="primary">tmk</name>
    <name type="ordered locus">XC_4020</name>
</gene>
<feature type="chain" id="PRO_1000023314" description="Thymidylate kinase">
    <location>
        <begin position="1"/>
        <end position="227"/>
    </location>
</feature>
<feature type="binding site" evidence="1">
    <location>
        <begin position="16"/>
        <end position="23"/>
    </location>
    <ligand>
        <name>ATP</name>
        <dbReference type="ChEBI" id="CHEBI:30616"/>
    </ligand>
</feature>
<sequence length="227" mass="24001">MTIELTPGGLLIAIEGIDGAGKTTLARSLATLLEQAGARVVLSKEPTNGPWGTQLRQSAATGRLSAQDEVDLLLRDRREHVEALIAPALARGEIVILDRYFPSMVAYQGAAGLPLDALLAANDFAPRPDLLLLLDLPPPTGLARIRARGDAPNHFETQDNLERCRAIFAALQLPGKHVIDASADADSVLRQAHAVVVAALADRLRVGATHTDAEKAALELLSAGRPA</sequence>
<organism>
    <name type="scientific">Xanthomonas campestris pv. campestris (strain 8004)</name>
    <dbReference type="NCBI Taxonomy" id="314565"/>
    <lineage>
        <taxon>Bacteria</taxon>
        <taxon>Pseudomonadati</taxon>
        <taxon>Pseudomonadota</taxon>
        <taxon>Gammaproteobacteria</taxon>
        <taxon>Lysobacterales</taxon>
        <taxon>Lysobacteraceae</taxon>
        <taxon>Xanthomonas</taxon>
    </lineage>
</organism>
<evidence type="ECO:0000255" key="1">
    <source>
        <dbReference type="HAMAP-Rule" id="MF_00165"/>
    </source>
</evidence>
<comment type="function">
    <text evidence="1">Phosphorylation of dTMP to form dTDP in both de novo and salvage pathways of dTTP synthesis.</text>
</comment>
<comment type="catalytic activity">
    <reaction evidence="1">
        <text>dTMP + ATP = dTDP + ADP</text>
        <dbReference type="Rhea" id="RHEA:13517"/>
        <dbReference type="ChEBI" id="CHEBI:30616"/>
        <dbReference type="ChEBI" id="CHEBI:58369"/>
        <dbReference type="ChEBI" id="CHEBI:63528"/>
        <dbReference type="ChEBI" id="CHEBI:456216"/>
        <dbReference type="EC" id="2.7.4.9"/>
    </reaction>
</comment>
<comment type="similarity">
    <text evidence="1">Belongs to the thymidylate kinase family.</text>
</comment>